<geneLocation type="chloroplast"/>
<evidence type="ECO:0000255" key="1">
    <source>
        <dbReference type="HAMAP-Rule" id="MF_00340"/>
    </source>
</evidence>
<evidence type="ECO:0000305" key="2"/>
<comment type="subcellular location">
    <subcellularLocation>
        <location>Plastid</location>
        <location>Chloroplast</location>
    </subcellularLocation>
</comment>
<comment type="similarity">
    <text evidence="1">Belongs to the bacterial ribosomal protein bL32 family.</text>
</comment>
<dbReference type="EMBL" id="AP009375">
    <property type="protein sequence ID" value="BAF50600.1"/>
    <property type="molecule type" value="Genomic_DNA"/>
</dbReference>
<dbReference type="RefSeq" id="YP_001123775.1">
    <property type="nucleotide sequence ID" value="NC_009274.1"/>
</dbReference>
<dbReference type="SMR" id="A4QLP5"/>
<dbReference type="GeneID" id="4964866"/>
<dbReference type="GO" id="GO:0009507">
    <property type="term" value="C:chloroplast"/>
    <property type="evidence" value="ECO:0007669"/>
    <property type="project" value="UniProtKB-SubCell"/>
</dbReference>
<dbReference type="GO" id="GO:0015934">
    <property type="term" value="C:large ribosomal subunit"/>
    <property type="evidence" value="ECO:0007669"/>
    <property type="project" value="InterPro"/>
</dbReference>
<dbReference type="GO" id="GO:0003735">
    <property type="term" value="F:structural constituent of ribosome"/>
    <property type="evidence" value="ECO:0007669"/>
    <property type="project" value="InterPro"/>
</dbReference>
<dbReference type="GO" id="GO:0006412">
    <property type="term" value="P:translation"/>
    <property type="evidence" value="ECO:0007669"/>
    <property type="project" value="UniProtKB-UniRule"/>
</dbReference>
<dbReference type="HAMAP" id="MF_00340">
    <property type="entry name" value="Ribosomal_bL32"/>
    <property type="match status" value="1"/>
</dbReference>
<dbReference type="InterPro" id="IPR002677">
    <property type="entry name" value="Ribosomal_bL32"/>
</dbReference>
<dbReference type="InterPro" id="IPR044958">
    <property type="entry name" value="Ribosomal_bL32_plant/cyanobact"/>
</dbReference>
<dbReference type="InterPro" id="IPR011332">
    <property type="entry name" value="Ribosomal_zn-bd"/>
</dbReference>
<dbReference type="PANTHER" id="PTHR36083">
    <property type="entry name" value="50S RIBOSOMAL PROTEIN L32, CHLOROPLASTIC"/>
    <property type="match status" value="1"/>
</dbReference>
<dbReference type="PANTHER" id="PTHR36083:SF1">
    <property type="entry name" value="LARGE RIBOSOMAL SUBUNIT PROTEIN BL32C"/>
    <property type="match status" value="1"/>
</dbReference>
<dbReference type="Pfam" id="PF01783">
    <property type="entry name" value="Ribosomal_L32p"/>
    <property type="match status" value="1"/>
</dbReference>
<dbReference type="SUPFAM" id="SSF57829">
    <property type="entry name" value="Zn-binding ribosomal proteins"/>
    <property type="match status" value="1"/>
</dbReference>
<name>RK32_LOBMA</name>
<organism>
    <name type="scientific">Lobularia maritima</name>
    <name type="common">Sweet alyssum</name>
    <name type="synonym">Alyssum maritimum</name>
    <dbReference type="NCBI Taxonomy" id="226051"/>
    <lineage>
        <taxon>Eukaryota</taxon>
        <taxon>Viridiplantae</taxon>
        <taxon>Streptophyta</taxon>
        <taxon>Embryophyta</taxon>
        <taxon>Tracheophyta</taxon>
        <taxon>Spermatophyta</taxon>
        <taxon>Magnoliopsida</taxon>
        <taxon>eudicotyledons</taxon>
        <taxon>Gunneridae</taxon>
        <taxon>Pentapetalae</taxon>
        <taxon>rosids</taxon>
        <taxon>malvids</taxon>
        <taxon>Brassicales</taxon>
        <taxon>Brassicaceae</taxon>
        <taxon>Anastaticeae</taxon>
        <taxon>Lobularia</taxon>
    </lineage>
</organism>
<protein>
    <recommendedName>
        <fullName evidence="1">Large ribosomal subunit protein bL32c</fullName>
    </recommendedName>
    <alternativeName>
        <fullName evidence="2">50S ribosomal protein L32, chloroplastic</fullName>
    </alternativeName>
</protein>
<feature type="chain" id="PRO_0000296616" description="Large ribosomal subunit protein bL32c">
    <location>
        <begin position="1"/>
        <end position="52"/>
    </location>
</feature>
<sequence length="52" mass="6061">MAVPKKRTSISKKRIRKKIWKRKGYWTSLKAFSLGKSLSTGNSKSFFVQQKN</sequence>
<keyword id="KW-0150">Chloroplast</keyword>
<keyword id="KW-0934">Plastid</keyword>
<keyword id="KW-0687">Ribonucleoprotein</keyword>
<keyword id="KW-0689">Ribosomal protein</keyword>
<gene>
    <name evidence="1" type="primary">rpl32</name>
</gene>
<accession>A4QLP5</accession>
<reference key="1">
    <citation type="submission" date="2007-03" db="EMBL/GenBank/DDBJ databases">
        <title>Sequencing analysis of Lobularia maritima chloroplast DNA.</title>
        <authorList>
            <person name="Hosouchi T."/>
            <person name="Tsuruoka H."/>
            <person name="Kotani H."/>
        </authorList>
    </citation>
    <scope>NUCLEOTIDE SEQUENCE [LARGE SCALE GENOMIC DNA]</scope>
</reference>
<proteinExistence type="inferred from homology"/>